<name>ENO_BURVG</name>
<gene>
    <name evidence="1" type="primary">eno</name>
    <name type="ordered locus">Bcep1808_2186</name>
</gene>
<reference key="1">
    <citation type="submission" date="2007-03" db="EMBL/GenBank/DDBJ databases">
        <title>Complete sequence of chromosome 1 of Burkholderia vietnamiensis G4.</title>
        <authorList>
            <consortium name="US DOE Joint Genome Institute"/>
            <person name="Copeland A."/>
            <person name="Lucas S."/>
            <person name="Lapidus A."/>
            <person name="Barry K."/>
            <person name="Detter J.C."/>
            <person name="Glavina del Rio T."/>
            <person name="Hammon N."/>
            <person name="Israni S."/>
            <person name="Dalin E."/>
            <person name="Tice H."/>
            <person name="Pitluck S."/>
            <person name="Chain P."/>
            <person name="Malfatti S."/>
            <person name="Shin M."/>
            <person name="Vergez L."/>
            <person name="Schmutz J."/>
            <person name="Larimer F."/>
            <person name="Land M."/>
            <person name="Hauser L."/>
            <person name="Kyrpides N."/>
            <person name="Tiedje J."/>
            <person name="Richardson P."/>
        </authorList>
    </citation>
    <scope>NUCLEOTIDE SEQUENCE [LARGE SCALE GENOMIC DNA]</scope>
    <source>
        <strain>G4 / LMG 22486</strain>
    </source>
</reference>
<protein>
    <recommendedName>
        <fullName evidence="1">Enolase</fullName>
        <ecNumber evidence="1">4.2.1.11</ecNumber>
    </recommendedName>
    <alternativeName>
        <fullName evidence="1">2-phospho-D-glycerate hydro-lyase</fullName>
    </alternativeName>
    <alternativeName>
        <fullName evidence="1">2-phosphoglycerate dehydratase</fullName>
    </alternativeName>
</protein>
<proteinExistence type="inferred from homology"/>
<organism>
    <name type="scientific">Burkholderia vietnamiensis (strain G4 / LMG 22486)</name>
    <name type="common">Burkholderia cepacia (strain R1808)</name>
    <dbReference type="NCBI Taxonomy" id="269482"/>
    <lineage>
        <taxon>Bacteria</taxon>
        <taxon>Pseudomonadati</taxon>
        <taxon>Pseudomonadota</taxon>
        <taxon>Betaproteobacteria</taxon>
        <taxon>Burkholderiales</taxon>
        <taxon>Burkholderiaceae</taxon>
        <taxon>Burkholderia</taxon>
        <taxon>Burkholderia cepacia complex</taxon>
    </lineage>
</organism>
<accession>A4JFY5</accession>
<dbReference type="EC" id="4.2.1.11" evidence="1"/>
<dbReference type="EMBL" id="CP000614">
    <property type="protein sequence ID" value="ABO55188.1"/>
    <property type="molecule type" value="Genomic_DNA"/>
</dbReference>
<dbReference type="SMR" id="A4JFY5"/>
<dbReference type="KEGG" id="bvi:Bcep1808_2186"/>
<dbReference type="eggNOG" id="COG0148">
    <property type="taxonomic scope" value="Bacteria"/>
</dbReference>
<dbReference type="HOGENOM" id="CLU_031223_2_1_4"/>
<dbReference type="UniPathway" id="UPA00109">
    <property type="reaction ID" value="UER00187"/>
</dbReference>
<dbReference type="Proteomes" id="UP000002287">
    <property type="component" value="Chromosome 1"/>
</dbReference>
<dbReference type="GO" id="GO:0009986">
    <property type="term" value="C:cell surface"/>
    <property type="evidence" value="ECO:0007669"/>
    <property type="project" value="UniProtKB-SubCell"/>
</dbReference>
<dbReference type="GO" id="GO:0005576">
    <property type="term" value="C:extracellular region"/>
    <property type="evidence" value="ECO:0007669"/>
    <property type="project" value="UniProtKB-SubCell"/>
</dbReference>
<dbReference type="GO" id="GO:0000015">
    <property type="term" value="C:phosphopyruvate hydratase complex"/>
    <property type="evidence" value="ECO:0007669"/>
    <property type="project" value="InterPro"/>
</dbReference>
<dbReference type="GO" id="GO:0000287">
    <property type="term" value="F:magnesium ion binding"/>
    <property type="evidence" value="ECO:0007669"/>
    <property type="project" value="UniProtKB-UniRule"/>
</dbReference>
<dbReference type="GO" id="GO:0004634">
    <property type="term" value="F:phosphopyruvate hydratase activity"/>
    <property type="evidence" value="ECO:0007669"/>
    <property type="project" value="UniProtKB-UniRule"/>
</dbReference>
<dbReference type="GO" id="GO:0006096">
    <property type="term" value="P:glycolytic process"/>
    <property type="evidence" value="ECO:0007669"/>
    <property type="project" value="UniProtKB-UniRule"/>
</dbReference>
<dbReference type="CDD" id="cd03313">
    <property type="entry name" value="enolase"/>
    <property type="match status" value="1"/>
</dbReference>
<dbReference type="FunFam" id="3.20.20.120:FF:000001">
    <property type="entry name" value="Enolase"/>
    <property type="match status" value="1"/>
</dbReference>
<dbReference type="FunFam" id="3.30.390.10:FF:000001">
    <property type="entry name" value="Enolase"/>
    <property type="match status" value="1"/>
</dbReference>
<dbReference type="Gene3D" id="3.20.20.120">
    <property type="entry name" value="Enolase-like C-terminal domain"/>
    <property type="match status" value="1"/>
</dbReference>
<dbReference type="Gene3D" id="3.30.390.10">
    <property type="entry name" value="Enolase-like, N-terminal domain"/>
    <property type="match status" value="1"/>
</dbReference>
<dbReference type="HAMAP" id="MF_00318">
    <property type="entry name" value="Enolase"/>
    <property type="match status" value="1"/>
</dbReference>
<dbReference type="InterPro" id="IPR000941">
    <property type="entry name" value="Enolase"/>
</dbReference>
<dbReference type="InterPro" id="IPR036849">
    <property type="entry name" value="Enolase-like_C_sf"/>
</dbReference>
<dbReference type="InterPro" id="IPR029017">
    <property type="entry name" value="Enolase-like_N"/>
</dbReference>
<dbReference type="InterPro" id="IPR020810">
    <property type="entry name" value="Enolase_C"/>
</dbReference>
<dbReference type="InterPro" id="IPR020809">
    <property type="entry name" value="Enolase_CS"/>
</dbReference>
<dbReference type="InterPro" id="IPR020811">
    <property type="entry name" value="Enolase_N"/>
</dbReference>
<dbReference type="NCBIfam" id="TIGR01060">
    <property type="entry name" value="eno"/>
    <property type="match status" value="1"/>
</dbReference>
<dbReference type="PANTHER" id="PTHR11902">
    <property type="entry name" value="ENOLASE"/>
    <property type="match status" value="1"/>
</dbReference>
<dbReference type="PANTHER" id="PTHR11902:SF1">
    <property type="entry name" value="ENOLASE"/>
    <property type="match status" value="1"/>
</dbReference>
<dbReference type="Pfam" id="PF00113">
    <property type="entry name" value="Enolase_C"/>
    <property type="match status" value="1"/>
</dbReference>
<dbReference type="Pfam" id="PF03952">
    <property type="entry name" value="Enolase_N"/>
    <property type="match status" value="1"/>
</dbReference>
<dbReference type="PIRSF" id="PIRSF001400">
    <property type="entry name" value="Enolase"/>
    <property type="match status" value="1"/>
</dbReference>
<dbReference type="PRINTS" id="PR00148">
    <property type="entry name" value="ENOLASE"/>
</dbReference>
<dbReference type="SFLD" id="SFLDS00001">
    <property type="entry name" value="Enolase"/>
    <property type="match status" value="1"/>
</dbReference>
<dbReference type="SFLD" id="SFLDF00002">
    <property type="entry name" value="enolase"/>
    <property type="match status" value="1"/>
</dbReference>
<dbReference type="SMART" id="SM01192">
    <property type="entry name" value="Enolase_C"/>
    <property type="match status" value="1"/>
</dbReference>
<dbReference type="SMART" id="SM01193">
    <property type="entry name" value="Enolase_N"/>
    <property type="match status" value="1"/>
</dbReference>
<dbReference type="SUPFAM" id="SSF51604">
    <property type="entry name" value="Enolase C-terminal domain-like"/>
    <property type="match status" value="1"/>
</dbReference>
<dbReference type="SUPFAM" id="SSF54826">
    <property type="entry name" value="Enolase N-terminal domain-like"/>
    <property type="match status" value="1"/>
</dbReference>
<dbReference type="PROSITE" id="PS00164">
    <property type="entry name" value="ENOLASE"/>
    <property type="match status" value="1"/>
</dbReference>
<sequence length="427" mass="45671">MSAIVDIIGREILDSRGNPTVECDVLLESGTMGRAAVPSGASTGSREAIELRDGEAGRYNGKGVLKAVEHINTEISEAIMGLDASEQAFLDKTLLELDGTDNKSRLGANAMLAVSMAVAKAAAEEAGLPLYRYFGGSGAMQLPVPMMNIVNGGAHANNSLDIQEFMIVPVSQPTFREALRCGAEVFHALKKILSDRGMSTAVGDEGGFAPNFGSNDECLSTILQAIEKAGYRAGEDVLLALDCAASEFYHDGKYQLAGEGLQLSSAEFTDYLATLADKFPIVSIEDGMHEGDWDGWKLLTERLGKKVQLVGDDLFVTNTRILKEGIEKGIANSILIKINQIGTLTETFAAIEMAKRAGYTAVISHRSGETEDSTIADIAVGLNAGQIKTGSLSRSDRISKYNQLLRIEEDLGDIASYPGKSAFYNLR</sequence>
<comment type="function">
    <text evidence="1">Catalyzes the reversible conversion of 2-phosphoglycerate (2-PG) into phosphoenolpyruvate (PEP). It is essential for the degradation of carbohydrates via glycolysis.</text>
</comment>
<comment type="catalytic activity">
    <reaction evidence="1">
        <text>(2R)-2-phosphoglycerate = phosphoenolpyruvate + H2O</text>
        <dbReference type="Rhea" id="RHEA:10164"/>
        <dbReference type="ChEBI" id="CHEBI:15377"/>
        <dbReference type="ChEBI" id="CHEBI:58289"/>
        <dbReference type="ChEBI" id="CHEBI:58702"/>
        <dbReference type="EC" id="4.2.1.11"/>
    </reaction>
</comment>
<comment type="cofactor">
    <cofactor evidence="1">
        <name>Mg(2+)</name>
        <dbReference type="ChEBI" id="CHEBI:18420"/>
    </cofactor>
    <text evidence="1">Binds a second Mg(2+) ion via substrate during catalysis.</text>
</comment>
<comment type="pathway">
    <text evidence="1">Carbohydrate degradation; glycolysis; pyruvate from D-glyceraldehyde 3-phosphate: step 4/5.</text>
</comment>
<comment type="subcellular location">
    <subcellularLocation>
        <location evidence="1">Cytoplasm</location>
    </subcellularLocation>
    <subcellularLocation>
        <location evidence="1">Secreted</location>
    </subcellularLocation>
    <subcellularLocation>
        <location evidence="1">Cell surface</location>
    </subcellularLocation>
    <text evidence="1">Fractions of enolase are present in both the cytoplasm and on the cell surface.</text>
</comment>
<comment type="similarity">
    <text evidence="1">Belongs to the enolase family.</text>
</comment>
<feature type="chain" id="PRO_1000019196" description="Enolase">
    <location>
        <begin position="1"/>
        <end position="427"/>
    </location>
</feature>
<feature type="active site" description="Proton donor" evidence="1">
    <location>
        <position position="205"/>
    </location>
</feature>
<feature type="active site" description="Proton acceptor" evidence="1">
    <location>
        <position position="337"/>
    </location>
</feature>
<feature type="binding site" evidence="1">
    <location>
        <position position="163"/>
    </location>
    <ligand>
        <name>(2R)-2-phosphoglycerate</name>
        <dbReference type="ChEBI" id="CHEBI:58289"/>
    </ligand>
</feature>
<feature type="binding site" evidence="1">
    <location>
        <position position="242"/>
    </location>
    <ligand>
        <name>Mg(2+)</name>
        <dbReference type="ChEBI" id="CHEBI:18420"/>
    </ligand>
</feature>
<feature type="binding site" evidence="1">
    <location>
        <position position="285"/>
    </location>
    <ligand>
        <name>Mg(2+)</name>
        <dbReference type="ChEBI" id="CHEBI:18420"/>
    </ligand>
</feature>
<feature type="binding site" evidence="1">
    <location>
        <position position="312"/>
    </location>
    <ligand>
        <name>Mg(2+)</name>
        <dbReference type="ChEBI" id="CHEBI:18420"/>
    </ligand>
</feature>
<feature type="binding site" evidence="1">
    <location>
        <position position="337"/>
    </location>
    <ligand>
        <name>(2R)-2-phosphoglycerate</name>
        <dbReference type="ChEBI" id="CHEBI:58289"/>
    </ligand>
</feature>
<feature type="binding site" evidence="1">
    <location>
        <position position="366"/>
    </location>
    <ligand>
        <name>(2R)-2-phosphoglycerate</name>
        <dbReference type="ChEBI" id="CHEBI:58289"/>
    </ligand>
</feature>
<feature type="binding site" evidence="1">
    <location>
        <position position="367"/>
    </location>
    <ligand>
        <name>(2R)-2-phosphoglycerate</name>
        <dbReference type="ChEBI" id="CHEBI:58289"/>
    </ligand>
</feature>
<feature type="binding site" evidence="1">
    <location>
        <position position="388"/>
    </location>
    <ligand>
        <name>(2R)-2-phosphoglycerate</name>
        <dbReference type="ChEBI" id="CHEBI:58289"/>
    </ligand>
</feature>
<keyword id="KW-0963">Cytoplasm</keyword>
<keyword id="KW-0324">Glycolysis</keyword>
<keyword id="KW-0456">Lyase</keyword>
<keyword id="KW-0460">Magnesium</keyword>
<keyword id="KW-0479">Metal-binding</keyword>
<keyword id="KW-0964">Secreted</keyword>
<evidence type="ECO:0000255" key="1">
    <source>
        <dbReference type="HAMAP-Rule" id="MF_00318"/>
    </source>
</evidence>